<keyword id="KW-0963">Cytoplasm</keyword>
<keyword id="KW-0255">Endonuclease</keyword>
<keyword id="KW-0269">Exonuclease</keyword>
<keyword id="KW-0378">Hydrolase</keyword>
<keyword id="KW-0479">Metal-binding</keyword>
<keyword id="KW-0540">Nuclease</keyword>
<keyword id="KW-1185">Reference proteome</keyword>
<keyword id="KW-0694">RNA-binding</keyword>
<keyword id="KW-0698">rRNA processing</keyword>
<keyword id="KW-0862">Zinc</keyword>
<organism>
    <name type="scientific">Bacillus subtilis (strain 168)</name>
    <dbReference type="NCBI Taxonomy" id="224308"/>
    <lineage>
        <taxon>Bacteria</taxon>
        <taxon>Bacillati</taxon>
        <taxon>Bacillota</taxon>
        <taxon>Bacilli</taxon>
        <taxon>Bacillales</taxon>
        <taxon>Bacillaceae</taxon>
        <taxon>Bacillus</taxon>
    </lineage>
</organism>
<feature type="chain" id="PRO_0000286833" description="Ribonuclease J2">
    <location>
        <begin position="1"/>
        <end position="555"/>
    </location>
</feature>
<feature type="binding site" evidence="2">
    <location>
        <position position="74"/>
    </location>
    <ligand>
        <name>Zn(2+)</name>
        <dbReference type="ChEBI" id="CHEBI:29105"/>
        <note>catalytic</note>
    </ligand>
</feature>
<feature type="binding site" evidence="2">
    <location>
        <position position="76"/>
    </location>
    <ligand>
        <name>Zn(2+)</name>
        <dbReference type="ChEBI" id="CHEBI:29105"/>
        <note>catalytic</note>
    </ligand>
</feature>
<feature type="binding site" evidence="2">
    <location>
        <position position="142"/>
    </location>
    <ligand>
        <name>Zn(2+)</name>
        <dbReference type="ChEBI" id="CHEBI:29105"/>
        <note>catalytic</note>
    </ligand>
</feature>
<feature type="binding site" evidence="2">
    <location>
        <position position="164"/>
    </location>
    <ligand>
        <name>Zn(2+)</name>
        <dbReference type="ChEBI" id="CHEBI:29105"/>
        <note>catalytic</note>
    </ligand>
</feature>
<feature type="binding site" evidence="2">
    <location>
        <begin position="364"/>
        <end position="368"/>
    </location>
    <ligand>
        <name>substrate</name>
    </ligand>
</feature>
<sequence>MKKKNTENVRIIALGGVGEIGKNLYVIEIDSDIFVVDAGLMHPENEMLGIDVVIPDISYLIERADRVKAIFLTHGHDENIGGVFYLLNKLSVPVYGTKLTLALLREKLKQYGHNRKTDLREIHSKSVITFESTKVSFFRTIHSIPDSVGVSFKTSLGSIVCTGDFKFDQTPALNQTCDIGEIAKIGNSGVLALLSDSANAERPGYTPSEAAVSGEISDALYNSQNRVIIAVFASNINRIQQVIHAAAQNGRKIAVAGKNLQSVLQLARKLGYIEADDELFISVQDVKKYPKREVAIITAGSQGEPLAALTRMANKAHKQLNIEEGDTVVIASTPIPGQELIYSKTVDLLARAGAQVIFAQKRVHVSGHGSQEELKLMINLLKPKYLIPVNGEYRMQKAHSKIAEETGMKRSDIFLIEKGDVVEFRGQNVKIGDKVPYGNILIDGLGVGDIGNIVLRDRRLLSQDGILIVVITLDKQKKHLVSGPEIITRGFVYVRESEGLIVQATELVRSIVTEATETSNVEWSTLKQAMRDALNQFLYEKTKRKPMIIPIIMEV</sequence>
<proteinExistence type="evidence at protein level"/>
<name>RNJ2_BACSU</name>
<reference key="1">
    <citation type="journal article" date="1997" name="Nature">
        <title>The complete genome sequence of the Gram-positive bacterium Bacillus subtilis.</title>
        <authorList>
            <person name="Kunst F."/>
            <person name="Ogasawara N."/>
            <person name="Moszer I."/>
            <person name="Albertini A.M."/>
            <person name="Alloni G."/>
            <person name="Azevedo V."/>
            <person name="Bertero M.G."/>
            <person name="Bessieres P."/>
            <person name="Bolotin A."/>
            <person name="Borchert S."/>
            <person name="Borriss R."/>
            <person name="Boursier L."/>
            <person name="Brans A."/>
            <person name="Braun M."/>
            <person name="Brignell S.C."/>
            <person name="Bron S."/>
            <person name="Brouillet S."/>
            <person name="Bruschi C.V."/>
            <person name="Caldwell B."/>
            <person name="Capuano V."/>
            <person name="Carter N.M."/>
            <person name="Choi S.-K."/>
            <person name="Codani J.-J."/>
            <person name="Connerton I.F."/>
            <person name="Cummings N.J."/>
            <person name="Daniel R.A."/>
            <person name="Denizot F."/>
            <person name="Devine K.M."/>
            <person name="Duesterhoeft A."/>
            <person name="Ehrlich S.D."/>
            <person name="Emmerson P.T."/>
            <person name="Entian K.-D."/>
            <person name="Errington J."/>
            <person name="Fabret C."/>
            <person name="Ferrari E."/>
            <person name="Foulger D."/>
            <person name="Fritz C."/>
            <person name="Fujita M."/>
            <person name="Fujita Y."/>
            <person name="Fuma S."/>
            <person name="Galizzi A."/>
            <person name="Galleron N."/>
            <person name="Ghim S.-Y."/>
            <person name="Glaser P."/>
            <person name="Goffeau A."/>
            <person name="Golightly E.J."/>
            <person name="Grandi G."/>
            <person name="Guiseppi G."/>
            <person name="Guy B.J."/>
            <person name="Haga K."/>
            <person name="Haiech J."/>
            <person name="Harwood C.R."/>
            <person name="Henaut A."/>
            <person name="Hilbert H."/>
            <person name="Holsappel S."/>
            <person name="Hosono S."/>
            <person name="Hullo M.-F."/>
            <person name="Itaya M."/>
            <person name="Jones L.-M."/>
            <person name="Joris B."/>
            <person name="Karamata D."/>
            <person name="Kasahara Y."/>
            <person name="Klaerr-Blanchard M."/>
            <person name="Klein C."/>
            <person name="Kobayashi Y."/>
            <person name="Koetter P."/>
            <person name="Koningstein G."/>
            <person name="Krogh S."/>
            <person name="Kumano M."/>
            <person name="Kurita K."/>
            <person name="Lapidus A."/>
            <person name="Lardinois S."/>
            <person name="Lauber J."/>
            <person name="Lazarevic V."/>
            <person name="Lee S.-M."/>
            <person name="Levine A."/>
            <person name="Liu H."/>
            <person name="Masuda S."/>
            <person name="Mauel C."/>
            <person name="Medigue C."/>
            <person name="Medina N."/>
            <person name="Mellado R.P."/>
            <person name="Mizuno M."/>
            <person name="Moestl D."/>
            <person name="Nakai S."/>
            <person name="Noback M."/>
            <person name="Noone D."/>
            <person name="O'Reilly M."/>
            <person name="Ogawa K."/>
            <person name="Ogiwara A."/>
            <person name="Oudega B."/>
            <person name="Park S.-H."/>
            <person name="Parro V."/>
            <person name="Pohl T.M."/>
            <person name="Portetelle D."/>
            <person name="Porwollik S."/>
            <person name="Prescott A.M."/>
            <person name="Presecan E."/>
            <person name="Pujic P."/>
            <person name="Purnelle B."/>
            <person name="Rapoport G."/>
            <person name="Rey M."/>
            <person name="Reynolds S."/>
            <person name="Rieger M."/>
            <person name="Rivolta C."/>
            <person name="Rocha E."/>
            <person name="Roche B."/>
            <person name="Rose M."/>
            <person name="Sadaie Y."/>
            <person name="Sato T."/>
            <person name="Scanlan E."/>
            <person name="Schleich S."/>
            <person name="Schroeter R."/>
            <person name="Scoffone F."/>
            <person name="Sekiguchi J."/>
            <person name="Sekowska A."/>
            <person name="Seror S.J."/>
            <person name="Serror P."/>
            <person name="Shin B.-S."/>
            <person name="Soldo B."/>
            <person name="Sorokin A."/>
            <person name="Tacconi E."/>
            <person name="Takagi T."/>
            <person name="Takahashi H."/>
            <person name="Takemaru K."/>
            <person name="Takeuchi M."/>
            <person name="Tamakoshi A."/>
            <person name="Tanaka T."/>
            <person name="Terpstra P."/>
            <person name="Tognoni A."/>
            <person name="Tosato V."/>
            <person name="Uchiyama S."/>
            <person name="Vandenbol M."/>
            <person name="Vannier F."/>
            <person name="Vassarotti A."/>
            <person name="Viari A."/>
            <person name="Wambutt R."/>
            <person name="Wedler E."/>
            <person name="Wedler H."/>
            <person name="Weitzenegger T."/>
            <person name="Winters P."/>
            <person name="Wipat A."/>
            <person name="Yamamoto H."/>
            <person name="Yamane K."/>
            <person name="Yasumoto K."/>
            <person name="Yata K."/>
            <person name="Yoshida K."/>
            <person name="Yoshikawa H.-F."/>
            <person name="Zumstein E."/>
            <person name="Yoshikawa H."/>
            <person name="Danchin A."/>
        </authorList>
    </citation>
    <scope>NUCLEOTIDE SEQUENCE [LARGE SCALE GENOMIC DNA]</scope>
    <source>
        <strain>168</strain>
    </source>
</reference>
<reference key="2">
    <citation type="journal article" date="2009" name="Microbiology">
        <title>From a consortium sequence to a unified sequence: the Bacillus subtilis 168 reference genome a decade later.</title>
        <authorList>
            <person name="Barbe V."/>
            <person name="Cruveiller S."/>
            <person name="Kunst F."/>
            <person name="Lenoble P."/>
            <person name="Meurice G."/>
            <person name="Sekowska A."/>
            <person name="Vallenet D."/>
            <person name="Wang T."/>
            <person name="Moszer I."/>
            <person name="Medigue C."/>
            <person name="Danchin A."/>
        </authorList>
    </citation>
    <scope>SEQUENCE REVISION TO 131; 161-162 AND 200</scope>
</reference>
<reference key="3">
    <citation type="journal article" date="2005" name="Nucleic Acids Res.">
        <title>Ribonucleases J1 and J2: two novel endoribonucleases in B.subtilis with functional homology to E.coli RNase E.</title>
        <authorList>
            <person name="Even S."/>
            <person name="Pellegrini O."/>
            <person name="Zig L."/>
            <person name="Labas V."/>
            <person name="Vinh J."/>
            <person name="Brechemmier-Baey D."/>
            <person name="Putzer H."/>
        </authorList>
    </citation>
    <scope>FUNCTION</scope>
    <scope>COFACTOR</scope>
    <scope>SUBCELLULAR LOCATION</scope>
    <scope>IDENTIFICATION BY MASS SPECTROMETRY</scope>
    <source>
        <strain>168</strain>
    </source>
</reference>
<reference key="4">
    <citation type="journal article" date="2007" name="Mol. Microbiol.">
        <title>Maturation of the 5' end of Bacillus subtilis 16S rRNA by the essential ribonuclease YkqC/RNase J1.</title>
        <authorList>
            <person name="Britton R.A."/>
            <person name="Wen T."/>
            <person name="Schaefer L."/>
            <person name="Pellegrini O."/>
            <person name="Uicker W.C."/>
            <person name="Mathy N."/>
            <person name="Tobin C."/>
            <person name="Daou R."/>
            <person name="Szyk J."/>
            <person name="Condon C."/>
        </authorList>
    </citation>
    <scope>FUNCTION</scope>
    <scope>DISRUPTION PHENOTYPE</scope>
    <source>
        <strain>168</strain>
    </source>
</reference>
<reference key="5">
    <citation type="journal article" date="2008" name="J. Biol. Chem.">
        <title>Role of Bacillus subtilis RNase J1 endonuclease and 5'-exonuclease activities in trp leader RNA turnover.</title>
        <authorList>
            <person name="Deikus G."/>
            <person name="Condon C."/>
            <person name="Bechhofer D.H."/>
        </authorList>
    </citation>
    <scope>FUNCTION</scope>
    <scope>DISRUPTION PHENOTYPE</scope>
</reference>
<reference key="6">
    <citation type="journal article" date="2008" name="Mol. Microbiol.">
        <title>mRNA processing by RNases J1 and J2 affects Bacillus subtilis gene expression on a global scale.</title>
        <authorList>
            <person name="Mader U."/>
            <person name="Zig L."/>
            <person name="Kretschmer J."/>
            <person name="Homuth G."/>
            <person name="Putzer H."/>
        </authorList>
    </citation>
    <scope>FUNCTION</scope>
    <scope>DISRUPTION PHENOTYPE</scope>
</reference>
<reference key="7">
    <citation type="journal article" date="2009" name="Mol. Cell. Proteomics">
        <title>Novel activities of glycolytic enzymes in Bacillus subtilis: interactions with essential proteins involved in mRNA processing.</title>
        <authorList>
            <person name="Commichau F.M."/>
            <person name="Rothe F.M."/>
            <person name="Herzberg C."/>
            <person name="Wagner E."/>
            <person name="Hellwig D."/>
            <person name="Lehnik-Habrink M."/>
            <person name="Hammer E."/>
            <person name="Volker U."/>
            <person name="Stulke J."/>
        </authorList>
    </citation>
    <scope>SUBUNIT</scope>
    <source>
        <strain>168</strain>
    </source>
</reference>
<reference key="8">
    <citation type="journal article" date="2010" name="Mol. Microbiol.">
        <title>Bacillus subtilis ribonucleases J1 and J2 form a complex with altered enzyme behaviour.</title>
        <authorList>
            <person name="Mathy N."/>
            <person name="Hebert A."/>
            <person name="Mervelet P."/>
            <person name="Benard L."/>
            <person name="Dorleans A."/>
            <person name="Li de la Sierra-Gallay I."/>
            <person name="Noirot P."/>
            <person name="Putzer H."/>
            <person name="Condon C."/>
        </authorList>
    </citation>
    <scope>FUNCTION</scope>
    <scope>BIOPHYSICOCHEMICAL PROPERTIES</scope>
    <scope>PROTEIN LEVELS</scope>
    <scope>INTERACTION WITH RNASE J1</scope>
    <scope>SUBUNIT</scope>
    <source>
        <strain>168</strain>
    </source>
</reference>
<reference key="9">
    <citation type="journal article" date="2011" name="J. Bacteriol.">
        <title>RNase Y in Bacillus subtilis: a natively disordered protein that is the functional equivalent of RNase E from Escherichia coli.</title>
        <authorList>
            <person name="Lehnik-Habrink M."/>
            <person name="Newman J."/>
            <person name="Rothe F.M."/>
            <person name="Solovyova A.S."/>
            <person name="Rodrigues C."/>
            <person name="Herzberg C."/>
            <person name="Commichau F.M."/>
            <person name="Lewis R.J."/>
            <person name="Stulke J."/>
        </authorList>
    </citation>
    <scope>INTERACTION WITH RNY</scope>
    <scope>SUBUNIT</scope>
    <source>
        <strain>168</strain>
    </source>
</reference>
<reference key="10">
    <citation type="journal article" date="2011" name="Structure">
        <title>Unusual, dual endo- and exonuclease activity in the degradosome explained by crystal structure analysis of RNase J1.</title>
        <authorList>
            <person name="Newman J.A."/>
            <person name="Hewitt L."/>
            <person name="Rodrigues C."/>
            <person name="Solovyova A."/>
            <person name="Harwood C.R."/>
            <person name="Lewis R.J."/>
        </authorList>
    </citation>
    <scope>DISCUSSION OF MECHANISM</scope>
    <scope>SUBUNIT</scope>
    <source>
        <strain>168</strain>
    </source>
</reference>
<reference key="11">
    <citation type="journal article" date="2011" name="Structure">
        <title>Molecular basis for the recognition and cleavage of RNA by the bifunctional 5'-3' exo/endoribonuclease RNase J.</title>
        <authorList>
            <person name="Dorleans A."/>
            <person name="Li de la Sierra-Gallay I."/>
            <person name="Piton J."/>
            <person name="Zig L."/>
            <person name="Gilet L."/>
            <person name="Putzer H."/>
            <person name="Condon C."/>
        </authorList>
    </citation>
    <scope>FUNCTION</scope>
    <scope>INTERACTION WITH RNASE J1</scope>
    <scope>SUBUNIT</scope>
</reference>
<evidence type="ECO:0000250" key="1"/>
<evidence type="ECO:0000255" key="2">
    <source>
        <dbReference type="HAMAP-Rule" id="MF_01491"/>
    </source>
</evidence>
<evidence type="ECO:0000269" key="3">
    <source>
    </source>
</evidence>
<evidence type="ECO:0000269" key="4">
    <source>
    </source>
</evidence>
<evidence type="ECO:0000269" key="5">
    <source>
    </source>
</evidence>
<evidence type="ECO:0000269" key="6">
    <source>
    </source>
</evidence>
<evidence type="ECO:0000269" key="7">
    <source>
    </source>
</evidence>
<evidence type="ECO:0000269" key="8">
    <source>
    </source>
</evidence>
<evidence type="ECO:0000269" key="9">
    <source>
    </source>
</evidence>
<evidence type="ECO:0000269" key="10">
    <source>
    </source>
</evidence>
<evidence type="ECO:0000269" key="11">
    <source>
    </source>
</evidence>
<protein>
    <recommendedName>
        <fullName evidence="2">Ribonuclease J2</fullName>
        <shortName evidence="2">RNase J2</shortName>
        <ecNumber evidence="2">3.1.-.-</ecNumber>
    </recommendedName>
</protein>
<gene>
    <name evidence="2" type="primary">rnjB</name>
    <name type="synonym">ymfA</name>
    <name type="ordered locus">BSU16780</name>
</gene>
<dbReference type="EC" id="3.1.-.-" evidence="2"/>
<dbReference type="EMBL" id="AL009126">
    <property type="protein sequence ID" value="CAB13551.2"/>
    <property type="molecule type" value="Genomic_DNA"/>
</dbReference>
<dbReference type="PIR" id="H69884">
    <property type="entry name" value="H69884"/>
</dbReference>
<dbReference type="RefSeq" id="NP_389560.2">
    <property type="nucleotide sequence ID" value="NC_000964.3"/>
</dbReference>
<dbReference type="RefSeq" id="WP_003231875.1">
    <property type="nucleotide sequence ID" value="NZ_OZ025638.1"/>
</dbReference>
<dbReference type="SMR" id="O31760"/>
<dbReference type="DIP" id="DIP-59141N"/>
<dbReference type="FunCoup" id="O31760">
    <property type="interactions" value="236"/>
</dbReference>
<dbReference type="IntAct" id="O31760">
    <property type="interactions" value="4"/>
</dbReference>
<dbReference type="MINT" id="O31760"/>
<dbReference type="STRING" id="224308.BSU16780"/>
<dbReference type="jPOST" id="O31760"/>
<dbReference type="PaxDb" id="224308-BSU16780"/>
<dbReference type="EnsemblBacteria" id="CAB13551">
    <property type="protein sequence ID" value="CAB13551"/>
    <property type="gene ID" value="BSU_16780"/>
</dbReference>
<dbReference type="GeneID" id="938463"/>
<dbReference type="KEGG" id="bsu:BSU16780"/>
<dbReference type="PATRIC" id="fig|224308.179.peg.1820"/>
<dbReference type="eggNOG" id="COG0595">
    <property type="taxonomic scope" value="Bacteria"/>
</dbReference>
<dbReference type="InParanoid" id="O31760"/>
<dbReference type="OrthoDB" id="9758375at2"/>
<dbReference type="PhylomeDB" id="O31760"/>
<dbReference type="BioCyc" id="BSUB:BSU16780-MONOMER"/>
<dbReference type="Proteomes" id="UP000001570">
    <property type="component" value="Chromosome"/>
</dbReference>
<dbReference type="GO" id="GO:0005737">
    <property type="term" value="C:cytoplasm"/>
    <property type="evidence" value="ECO:0007669"/>
    <property type="project" value="UniProtKB-SubCell"/>
</dbReference>
<dbReference type="GO" id="GO:0004534">
    <property type="term" value="F:5'-3' RNA exonuclease activity"/>
    <property type="evidence" value="ECO:0007669"/>
    <property type="project" value="UniProtKB-UniRule"/>
</dbReference>
<dbReference type="GO" id="GO:0003723">
    <property type="term" value="F:RNA binding"/>
    <property type="evidence" value="ECO:0007669"/>
    <property type="project" value="UniProtKB-UniRule"/>
</dbReference>
<dbReference type="GO" id="GO:0004521">
    <property type="term" value="F:RNA endonuclease activity"/>
    <property type="evidence" value="ECO:0000314"/>
    <property type="project" value="UniProtKB"/>
</dbReference>
<dbReference type="GO" id="GO:0008270">
    <property type="term" value="F:zinc ion binding"/>
    <property type="evidence" value="ECO:0007669"/>
    <property type="project" value="InterPro"/>
</dbReference>
<dbReference type="GO" id="GO:0006397">
    <property type="term" value="P:mRNA processing"/>
    <property type="evidence" value="ECO:0000314"/>
    <property type="project" value="UniProtKB"/>
</dbReference>
<dbReference type="GO" id="GO:0006364">
    <property type="term" value="P:rRNA processing"/>
    <property type="evidence" value="ECO:0007669"/>
    <property type="project" value="UniProtKB-UniRule"/>
</dbReference>
<dbReference type="CDD" id="cd07714">
    <property type="entry name" value="RNaseJ_MBL-fold"/>
    <property type="match status" value="1"/>
</dbReference>
<dbReference type="FunFam" id="3.10.20.580:FF:000001">
    <property type="entry name" value="Ribonuclease J"/>
    <property type="match status" value="1"/>
</dbReference>
<dbReference type="Gene3D" id="3.10.20.580">
    <property type="match status" value="1"/>
</dbReference>
<dbReference type="Gene3D" id="3.40.50.10710">
    <property type="entry name" value="Metallo-hydrolase/oxidoreductase"/>
    <property type="match status" value="1"/>
</dbReference>
<dbReference type="Gene3D" id="3.60.15.10">
    <property type="entry name" value="Ribonuclease Z/Hydroxyacylglutathione hydrolase-like"/>
    <property type="match status" value="1"/>
</dbReference>
<dbReference type="HAMAP" id="MF_01491">
    <property type="entry name" value="RNase_J_bact"/>
    <property type="match status" value="1"/>
</dbReference>
<dbReference type="InterPro" id="IPR001279">
    <property type="entry name" value="Metallo-B-lactamas"/>
</dbReference>
<dbReference type="InterPro" id="IPR036866">
    <property type="entry name" value="RibonucZ/Hydroxyglut_hydro"/>
</dbReference>
<dbReference type="InterPro" id="IPR011108">
    <property type="entry name" value="RMMBL"/>
</dbReference>
<dbReference type="InterPro" id="IPR004613">
    <property type="entry name" value="RNase_J"/>
</dbReference>
<dbReference type="InterPro" id="IPR042173">
    <property type="entry name" value="RNase_J_2"/>
</dbReference>
<dbReference type="InterPro" id="IPR055132">
    <property type="entry name" value="RNase_J_b_CASP"/>
</dbReference>
<dbReference type="InterPro" id="IPR030854">
    <property type="entry name" value="RNase_J_bac"/>
</dbReference>
<dbReference type="InterPro" id="IPR041636">
    <property type="entry name" value="RNase_J_C"/>
</dbReference>
<dbReference type="NCBIfam" id="TIGR00649">
    <property type="entry name" value="MG423"/>
    <property type="match status" value="1"/>
</dbReference>
<dbReference type="PANTHER" id="PTHR43694">
    <property type="entry name" value="RIBONUCLEASE J"/>
    <property type="match status" value="1"/>
</dbReference>
<dbReference type="PANTHER" id="PTHR43694:SF4">
    <property type="entry name" value="RIBONUCLEASE J 2"/>
    <property type="match status" value="1"/>
</dbReference>
<dbReference type="Pfam" id="PF00753">
    <property type="entry name" value="Lactamase_B"/>
    <property type="match status" value="1"/>
</dbReference>
<dbReference type="Pfam" id="PF07521">
    <property type="entry name" value="RMMBL"/>
    <property type="match status" value="1"/>
</dbReference>
<dbReference type="Pfam" id="PF22505">
    <property type="entry name" value="RNase_J_b_CASP"/>
    <property type="match status" value="1"/>
</dbReference>
<dbReference type="Pfam" id="PF17770">
    <property type="entry name" value="RNase_J_C"/>
    <property type="match status" value="1"/>
</dbReference>
<dbReference type="PIRSF" id="PIRSF004803">
    <property type="entry name" value="RnjA"/>
    <property type="match status" value="1"/>
</dbReference>
<dbReference type="SMART" id="SM00849">
    <property type="entry name" value="Lactamase_B"/>
    <property type="match status" value="1"/>
</dbReference>
<dbReference type="SUPFAM" id="SSF56281">
    <property type="entry name" value="Metallo-hydrolase/oxidoreductase"/>
    <property type="match status" value="1"/>
</dbReference>
<comment type="function">
    <text evidence="3 4 5 6 8 11">Endonucleolytically cleaves the 5'-leader sequence of certain mRNAs. Endonuclease digestion by the RNase J1/J2 complex occurs at a different site and in some cases more efficiently than J1 or J2 alone. The exonuclease activity of the J1/J2 complex is highly processive on substrates longer than 5 nucleotides, on shorter substrates is distributive. Plays a role in mRNA maturation and stability. Appears to have a limited effect on 16S rRNA maturation, despite its similarity to RNase J1. This subunit alone has very poor 5'-3' exonuclease activity.</text>
</comment>
<comment type="cofactor">
    <cofactor evidence="1 3 10">
        <name>Zn(2+)</name>
        <dbReference type="ChEBI" id="CHEBI:29105"/>
    </cofactor>
    <text evidence="1 3 10">Binds 1 zinc ion per subunit. The inability to bind a second zinc ion may explain its very poor exonuclease activity (PubMed:21893285).</text>
</comment>
<comment type="biophysicochemical properties">
    <kinetics>
        <KM evidence="8">5.96 uM for exonuclease on 30 nt RNA hybridized to 17 nt quenching DNA, J2 alone</KM>
        <KM evidence="8">0.22 uM for exonuclease on 30 nt RNA hybridized to 17 nt quenching DNA, J1/J2 complex</KM>
        <text>kcat is 0.58 sec(-1) for J1, 0.13 sec(-1) for J1/J2 and &lt;0.005 sec(-1) for J2.</text>
    </kinetics>
</comment>
<comment type="subunit">
    <text evidence="7 8 9 10 11">Unclear whether it forms homodimers or belongs to a larger complex. According to (PubMed:20025672) probably does not form homodimers, while (PubMed:21893285) shows homodimer formation. Both reports show RNase J1 and J2 interaction, probably as a heterotetramer (PubMed:19193632) shows it is a component of a possible RNA degradosome complex composed of rny, rnjA, rnjB, pnp, pfkA and eno, while (PubMed:20025672) finds no evidence of an RNA degradosome complex.</text>
</comment>
<comment type="interaction">
    <interactant intactId="EBI-6415198">
        <id>O31760</id>
    </interactant>
    <interactant intactId="EBI-6415229">
        <id>Q45493</id>
        <label>rnjA</label>
    </interactant>
    <organismsDiffer>false</organismsDiffer>
    <experiments>4</experiments>
</comment>
<comment type="subcellular location">
    <subcellularLocation>
        <location evidence="2 3">Cytoplasm</location>
    </subcellularLocation>
</comment>
<comment type="disruption phenotype">
    <text evidence="4 5 6">Not essential. While depletion/deletion of RNase J1 or J2 has no large impact on global gene expression, a double mutant alters the expression of hundreds of genes (PubMed:18713320).</text>
</comment>
<comment type="miscellaneous">
    <text>Present in about 3000 monomers per cell in mid-log phase.</text>
</comment>
<comment type="similarity">
    <text evidence="2">Belongs to the metallo-beta-lactamase superfamily. RNA-metabolizing metallo-beta-lactamase-like family. Bacterial RNase J subfamily.</text>
</comment>
<accession>O31760</accession>